<comment type="subcellular location">
    <subcellularLocation>
        <location evidence="2">Cell membrane</location>
        <topology evidence="2">Multi-pass membrane protein</topology>
    </subcellularLocation>
</comment>
<comment type="similarity">
    <text evidence="2">Belongs to the UPF0749 family.</text>
</comment>
<comment type="sequence caution" evidence="2">
    <conflict type="erroneous initiation">
        <sequence resource="EMBL-CDS" id="AAK46144"/>
    </conflict>
</comment>
<feature type="signal peptide" evidence="1">
    <location>
        <begin position="1"/>
        <end position="23"/>
    </location>
</feature>
<feature type="chain" id="PRO_0000428545" description="UPF0749 protein MT1871">
    <location>
        <begin position="24"/>
        <end position="307"/>
    </location>
</feature>
<feature type="transmembrane region" description="Helical" evidence="1">
    <location>
        <begin position="67"/>
        <end position="87"/>
    </location>
</feature>
<feature type="transmembrane region" description="Helical" evidence="1">
    <location>
        <begin position="152"/>
        <end position="172"/>
    </location>
</feature>
<sequence>MAESDRLLGGYDPNAGYSAHAGAQPQRIPVPSLLRALLSEHLDAGYAAVAAERERAAAPRCWQARAVSWMWQALAATLVAAVFAAAVAQARSVAPGVRAAQQLLVASVRSTQAAATTLAQRRSTLSAKVDDVRRIVLADDAEGQRLLARLDVLSLAAASAPVVGPGLTVTVTDPGASPNLSDVSKQRVSGSQQIILDRDLQLVVNSLWESGAEAISIDGVRIGPNVTIRQAGGAILVDNNPTSSPYTILAVGPPHAMQDVFDRSAGLYRLRLLETSYGVGVSVNVGDGLALPAGATRDVKFAKQIGP</sequence>
<dbReference type="EMBL" id="AE000516">
    <property type="protein sequence ID" value="AAK46144.1"/>
    <property type="status" value="ALT_INIT"/>
    <property type="molecule type" value="Genomic_DNA"/>
</dbReference>
<dbReference type="PIR" id="H70720">
    <property type="entry name" value="H70720"/>
</dbReference>
<dbReference type="RefSeq" id="WP_003901262.1">
    <property type="nucleotide sequence ID" value="NZ_KK341227.1"/>
</dbReference>
<dbReference type="SMR" id="P9WFG0"/>
<dbReference type="KEGG" id="mtc:MT1871"/>
<dbReference type="PATRIC" id="fig|83331.31.peg.2015"/>
<dbReference type="HOGENOM" id="CLU_040273_1_0_11"/>
<dbReference type="Proteomes" id="UP000001020">
    <property type="component" value="Chromosome"/>
</dbReference>
<dbReference type="GO" id="GO:0005886">
    <property type="term" value="C:plasma membrane"/>
    <property type="evidence" value="ECO:0007669"/>
    <property type="project" value="UniProtKB-SubCell"/>
</dbReference>
<dbReference type="FunFam" id="3.30.70.1880:FF:000001">
    <property type="entry name" value="Membrane associated protein"/>
    <property type="match status" value="1"/>
</dbReference>
<dbReference type="Gene3D" id="3.30.70.1880">
    <property type="entry name" value="Protein of unknown function DUF881"/>
    <property type="match status" value="1"/>
</dbReference>
<dbReference type="InterPro" id="IPR010273">
    <property type="entry name" value="DUF881"/>
</dbReference>
<dbReference type="PANTHER" id="PTHR37313:SF1">
    <property type="entry name" value="UPF0749 PROTEIN RV1823"/>
    <property type="match status" value="1"/>
</dbReference>
<dbReference type="PANTHER" id="PTHR37313">
    <property type="entry name" value="UPF0749 PROTEIN RV1825"/>
    <property type="match status" value="1"/>
</dbReference>
<dbReference type="Pfam" id="PF05949">
    <property type="entry name" value="DUF881"/>
    <property type="match status" value="1"/>
</dbReference>
<organism>
    <name type="scientific">Mycobacterium tuberculosis (strain CDC 1551 / Oshkosh)</name>
    <dbReference type="NCBI Taxonomy" id="83331"/>
    <lineage>
        <taxon>Bacteria</taxon>
        <taxon>Bacillati</taxon>
        <taxon>Actinomycetota</taxon>
        <taxon>Actinomycetes</taxon>
        <taxon>Mycobacteriales</taxon>
        <taxon>Mycobacteriaceae</taxon>
        <taxon>Mycobacterium</taxon>
        <taxon>Mycobacterium tuberculosis complex</taxon>
    </lineage>
</organism>
<reference key="1">
    <citation type="journal article" date="2002" name="J. Bacteriol.">
        <title>Whole-genome comparison of Mycobacterium tuberculosis clinical and laboratory strains.</title>
        <authorList>
            <person name="Fleischmann R.D."/>
            <person name="Alland D."/>
            <person name="Eisen J.A."/>
            <person name="Carpenter L."/>
            <person name="White O."/>
            <person name="Peterson J.D."/>
            <person name="DeBoy R.T."/>
            <person name="Dodson R.J."/>
            <person name="Gwinn M.L."/>
            <person name="Haft D.H."/>
            <person name="Hickey E.K."/>
            <person name="Kolonay J.F."/>
            <person name="Nelson W.C."/>
            <person name="Umayam L.A."/>
            <person name="Ermolaeva M.D."/>
            <person name="Salzberg S.L."/>
            <person name="Delcher A."/>
            <person name="Utterback T.R."/>
            <person name="Weidman J.F."/>
            <person name="Khouri H.M."/>
            <person name="Gill J."/>
            <person name="Mikula A."/>
            <person name="Bishai W."/>
            <person name="Jacobs W.R. Jr."/>
            <person name="Venter J.C."/>
            <person name="Fraser C.M."/>
        </authorList>
    </citation>
    <scope>NUCLEOTIDE SEQUENCE [LARGE SCALE GENOMIC DNA]</scope>
    <source>
        <strain>CDC 1551 / Oshkosh</strain>
    </source>
</reference>
<protein>
    <recommendedName>
        <fullName>UPF0749 protein MT1871</fullName>
    </recommendedName>
</protein>
<proteinExistence type="inferred from homology"/>
<accession>P9WFG0</accession>
<accession>L0TAQ3</accession>
<accession>P64891</accession>
<accession>Q50610</accession>
<evidence type="ECO:0000255" key="1"/>
<evidence type="ECO:0000305" key="2"/>
<keyword id="KW-1003">Cell membrane</keyword>
<keyword id="KW-0472">Membrane</keyword>
<keyword id="KW-1185">Reference proteome</keyword>
<keyword id="KW-0732">Signal</keyword>
<keyword id="KW-0812">Transmembrane</keyword>
<keyword id="KW-1133">Transmembrane helix</keyword>
<gene>
    <name type="ordered locus">MT1871</name>
</gene>
<name>Y1823_MYCTO</name>